<protein>
    <recommendedName>
        <fullName evidence="1">Glutamate racemase</fullName>
        <ecNumber evidence="1">5.1.1.3</ecNumber>
    </recommendedName>
</protein>
<reference key="1">
    <citation type="submission" date="2009-03" db="EMBL/GenBank/DDBJ databases">
        <title>Brucella melitensis ATCC 23457 whole genome shotgun sequencing project.</title>
        <authorList>
            <person name="Setubal J.C."/>
            <person name="Boyle S."/>
            <person name="Crasta O.R."/>
            <person name="Gillespie J.J."/>
            <person name="Kenyon R.W."/>
            <person name="Lu J."/>
            <person name="Mane S."/>
            <person name="Nagrani S."/>
            <person name="Shallom J.M."/>
            <person name="Shallom S."/>
            <person name="Shukla M."/>
            <person name="Snyder E.E."/>
            <person name="Sobral B.W."/>
            <person name="Wattam A.R."/>
            <person name="Will R."/>
            <person name="Williams K."/>
            <person name="Yoo H."/>
            <person name="Munk C."/>
            <person name="Tapia R."/>
            <person name="Han C."/>
            <person name="Detter J.C."/>
            <person name="Bruce D."/>
            <person name="Brettin T.S."/>
        </authorList>
    </citation>
    <scope>NUCLEOTIDE SEQUENCE [LARGE SCALE GENOMIC DNA]</scope>
    <source>
        <strain>ATCC 23457</strain>
    </source>
</reference>
<feature type="chain" id="PRO_1000125603" description="Glutamate racemase">
    <location>
        <begin position="1"/>
        <end position="277"/>
    </location>
</feature>
<feature type="active site" description="Proton donor/acceptor" evidence="1">
    <location>
        <position position="89"/>
    </location>
</feature>
<feature type="active site" description="Proton donor/acceptor" evidence="1">
    <location>
        <position position="204"/>
    </location>
</feature>
<feature type="binding site" evidence="1">
    <location>
        <begin position="25"/>
        <end position="26"/>
    </location>
    <ligand>
        <name>substrate</name>
    </ligand>
</feature>
<feature type="binding site" evidence="1">
    <location>
        <begin position="57"/>
        <end position="58"/>
    </location>
    <ligand>
        <name>substrate</name>
    </ligand>
</feature>
<feature type="binding site" evidence="1">
    <location>
        <begin position="90"/>
        <end position="91"/>
    </location>
    <ligand>
        <name>substrate</name>
    </ligand>
</feature>
<feature type="binding site" evidence="1">
    <location>
        <begin position="205"/>
        <end position="206"/>
    </location>
    <ligand>
        <name>substrate</name>
    </ligand>
</feature>
<sequence>MKKAPAGSFPAKPTIAPERPILVFDSGIGGLTVLREARVVMPDRRFVYIADDAGFPYGNWEEEALKRRIIELFGEFIANYDPEIAVIACNTASTLVLEDLRRAYPSVPFVGTVPAIKPAAERTSSGLVSVLATPGTVKRAYTRDLIQSFASRCHVRLVGADGLAAIAEAHIRGESFDEALVMAQIAPCFIEKDGKRTDIVVLACTHYPFLVNVLRRLAPWPVDWLDPAEAIARRMKSLLPARSDDDEFHSQDDLAFFTSRKPDYAIRRLMQGFGLRF</sequence>
<dbReference type="EC" id="5.1.1.3" evidence="1"/>
<dbReference type="EMBL" id="CP001488">
    <property type="protein sequence ID" value="ACO00970.1"/>
    <property type="molecule type" value="Genomic_DNA"/>
</dbReference>
<dbReference type="RefSeq" id="WP_002964323.1">
    <property type="nucleotide sequence ID" value="NC_012441.1"/>
</dbReference>
<dbReference type="SMR" id="C0RJG2"/>
<dbReference type="GeneID" id="97533561"/>
<dbReference type="KEGG" id="bmi:BMEA_A1239"/>
<dbReference type="HOGENOM" id="CLU_052344_2_0_5"/>
<dbReference type="UniPathway" id="UPA00219"/>
<dbReference type="Proteomes" id="UP000001748">
    <property type="component" value="Chromosome I"/>
</dbReference>
<dbReference type="GO" id="GO:0008881">
    <property type="term" value="F:glutamate racemase activity"/>
    <property type="evidence" value="ECO:0007669"/>
    <property type="project" value="UniProtKB-UniRule"/>
</dbReference>
<dbReference type="GO" id="GO:0071555">
    <property type="term" value="P:cell wall organization"/>
    <property type="evidence" value="ECO:0007669"/>
    <property type="project" value="UniProtKB-KW"/>
</dbReference>
<dbReference type="GO" id="GO:0009252">
    <property type="term" value="P:peptidoglycan biosynthetic process"/>
    <property type="evidence" value="ECO:0007669"/>
    <property type="project" value="UniProtKB-UniRule"/>
</dbReference>
<dbReference type="GO" id="GO:0008360">
    <property type="term" value="P:regulation of cell shape"/>
    <property type="evidence" value="ECO:0007669"/>
    <property type="project" value="UniProtKB-KW"/>
</dbReference>
<dbReference type="Gene3D" id="3.40.50.1860">
    <property type="match status" value="2"/>
</dbReference>
<dbReference type="HAMAP" id="MF_00258">
    <property type="entry name" value="Glu_racemase"/>
    <property type="match status" value="1"/>
</dbReference>
<dbReference type="InterPro" id="IPR015942">
    <property type="entry name" value="Asp/Glu/hydantoin_racemase"/>
</dbReference>
<dbReference type="InterPro" id="IPR001920">
    <property type="entry name" value="Asp/Glu_race"/>
</dbReference>
<dbReference type="InterPro" id="IPR018187">
    <property type="entry name" value="Asp/Glu_racemase_AS_1"/>
</dbReference>
<dbReference type="InterPro" id="IPR033134">
    <property type="entry name" value="Asp/Glu_racemase_AS_2"/>
</dbReference>
<dbReference type="InterPro" id="IPR004391">
    <property type="entry name" value="Glu_race"/>
</dbReference>
<dbReference type="NCBIfam" id="TIGR00067">
    <property type="entry name" value="glut_race"/>
    <property type="match status" value="1"/>
</dbReference>
<dbReference type="PANTHER" id="PTHR21198">
    <property type="entry name" value="GLUTAMATE RACEMASE"/>
    <property type="match status" value="1"/>
</dbReference>
<dbReference type="PANTHER" id="PTHR21198:SF2">
    <property type="entry name" value="GLUTAMATE RACEMASE"/>
    <property type="match status" value="1"/>
</dbReference>
<dbReference type="Pfam" id="PF01177">
    <property type="entry name" value="Asp_Glu_race"/>
    <property type="match status" value="1"/>
</dbReference>
<dbReference type="SUPFAM" id="SSF53681">
    <property type="entry name" value="Aspartate/glutamate racemase"/>
    <property type="match status" value="2"/>
</dbReference>
<dbReference type="PROSITE" id="PS00923">
    <property type="entry name" value="ASP_GLU_RACEMASE_1"/>
    <property type="match status" value="1"/>
</dbReference>
<dbReference type="PROSITE" id="PS00924">
    <property type="entry name" value="ASP_GLU_RACEMASE_2"/>
    <property type="match status" value="1"/>
</dbReference>
<organism>
    <name type="scientific">Brucella melitensis biotype 2 (strain ATCC 23457)</name>
    <dbReference type="NCBI Taxonomy" id="546272"/>
    <lineage>
        <taxon>Bacteria</taxon>
        <taxon>Pseudomonadati</taxon>
        <taxon>Pseudomonadota</taxon>
        <taxon>Alphaproteobacteria</taxon>
        <taxon>Hyphomicrobiales</taxon>
        <taxon>Brucellaceae</taxon>
        <taxon>Brucella/Ochrobactrum group</taxon>
        <taxon>Brucella</taxon>
    </lineage>
</organism>
<evidence type="ECO:0000255" key="1">
    <source>
        <dbReference type="HAMAP-Rule" id="MF_00258"/>
    </source>
</evidence>
<gene>
    <name evidence="1" type="primary">murI</name>
    <name type="ordered locus">BMEA_A1239</name>
</gene>
<keyword id="KW-0133">Cell shape</keyword>
<keyword id="KW-0961">Cell wall biogenesis/degradation</keyword>
<keyword id="KW-0413">Isomerase</keyword>
<keyword id="KW-0573">Peptidoglycan synthesis</keyword>
<comment type="function">
    <text evidence="1">Provides the (R)-glutamate required for cell wall biosynthesis.</text>
</comment>
<comment type="catalytic activity">
    <reaction evidence="1">
        <text>L-glutamate = D-glutamate</text>
        <dbReference type="Rhea" id="RHEA:12813"/>
        <dbReference type="ChEBI" id="CHEBI:29985"/>
        <dbReference type="ChEBI" id="CHEBI:29986"/>
        <dbReference type="EC" id="5.1.1.3"/>
    </reaction>
</comment>
<comment type="pathway">
    <text evidence="1">Cell wall biogenesis; peptidoglycan biosynthesis.</text>
</comment>
<comment type="similarity">
    <text evidence="1">Belongs to the aspartate/glutamate racemases family.</text>
</comment>
<proteinExistence type="inferred from homology"/>
<name>MURI_BRUMB</name>
<accession>C0RJG2</accession>